<accession>Q9ZCQ7</accession>
<dbReference type="EMBL" id="AJ235272">
    <property type="protein sequence ID" value="CAA15097.1"/>
    <property type="molecule type" value="Genomic_DNA"/>
</dbReference>
<dbReference type="PIR" id="G71671">
    <property type="entry name" value="G71671"/>
</dbReference>
<dbReference type="RefSeq" id="NP_221021.1">
    <property type="nucleotide sequence ID" value="NC_000963.1"/>
</dbReference>
<dbReference type="RefSeq" id="WP_004596201.1">
    <property type="nucleotide sequence ID" value="NC_000963.1"/>
</dbReference>
<dbReference type="SMR" id="Q9ZCQ7"/>
<dbReference type="STRING" id="272947.gene:17555734"/>
<dbReference type="EnsemblBacteria" id="CAA15097">
    <property type="protein sequence ID" value="CAA15097"/>
    <property type="gene ID" value="CAA15097"/>
</dbReference>
<dbReference type="GeneID" id="57569782"/>
<dbReference type="KEGG" id="rpr:RP657"/>
<dbReference type="PATRIC" id="fig|272947.5.peg.679"/>
<dbReference type="eggNOG" id="COG0089">
    <property type="taxonomic scope" value="Bacteria"/>
</dbReference>
<dbReference type="HOGENOM" id="CLU_037562_3_1_5"/>
<dbReference type="OrthoDB" id="9793353at2"/>
<dbReference type="Proteomes" id="UP000002480">
    <property type="component" value="Chromosome"/>
</dbReference>
<dbReference type="GO" id="GO:1990904">
    <property type="term" value="C:ribonucleoprotein complex"/>
    <property type="evidence" value="ECO:0007669"/>
    <property type="project" value="UniProtKB-KW"/>
</dbReference>
<dbReference type="GO" id="GO:0005840">
    <property type="term" value="C:ribosome"/>
    <property type="evidence" value="ECO:0007669"/>
    <property type="project" value="UniProtKB-KW"/>
</dbReference>
<dbReference type="GO" id="GO:0019843">
    <property type="term" value="F:rRNA binding"/>
    <property type="evidence" value="ECO:0007669"/>
    <property type="project" value="UniProtKB-UniRule"/>
</dbReference>
<dbReference type="GO" id="GO:0003735">
    <property type="term" value="F:structural constituent of ribosome"/>
    <property type="evidence" value="ECO:0007669"/>
    <property type="project" value="InterPro"/>
</dbReference>
<dbReference type="GO" id="GO:0006412">
    <property type="term" value="P:translation"/>
    <property type="evidence" value="ECO:0007669"/>
    <property type="project" value="UniProtKB-UniRule"/>
</dbReference>
<dbReference type="FunFam" id="3.30.70.330:FF:000001">
    <property type="entry name" value="50S ribosomal protein L23"/>
    <property type="match status" value="1"/>
</dbReference>
<dbReference type="Gene3D" id="3.30.70.330">
    <property type="match status" value="1"/>
</dbReference>
<dbReference type="HAMAP" id="MF_01369_B">
    <property type="entry name" value="Ribosomal_uL23_B"/>
    <property type="match status" value="1"/>
</dbReference>
<dbReference type="InterPro" id="IPR012677">
    <property type="entry name" value="Nucleotide-bd_a/b_plait_sf"/>
</dbReference>
<dbReference type="InterPro" id="IPR013025">
    <property type="entry name" value="Ribosomal_uL23-like"/>
</dbReference>
<dbReference type="InterPro" id="IPR012678">
    <property type="entry name" value="Ribosomal_uL23/eL15/eS24_sf"/>
</dbReference>
<dbReference type="NCBIfam" id="NF004363">
    <property type="entry name" value="PRK05738.2-4"/>
    <property type="match status" value="1"/>
</dbReference>
<dbReference type="PANTHER" id="PTHR11620">
    <property type="entry name" value="60S RIBOSOMAL PROTEIN L23A"/>
    <property type="match status" value="1"/>
</dbReference>
<dbReference type="Pfam" id="PF00276">
    <property type="entry name" value="Ribosomal_L23"/>
    <property type="match status" value="1"/>
</dbReference>
<dbReference type="SUPFAM" id="SSF54189">
    <property type="entry name" value="Ribosomal proteins S24e, L23 and L15e"/>
    <property type="match status" value="1"/>
</dbReference>
<name>RL23_RICPR</name>
<sequence length="98" mass="11411">MSVYKYYDLIRKPIITEKTTSISEQNKYTFYVNKFAKKLSLKRAIEAIFKVKVKKVNILNIKGKKKRFKGIIGTQINRKKAIVTLEKDHNIDYAGGIK</sequence>
<proteinExistence type="inferred from homology"/>
<feature type="chain" id="PRO_0000129422" description="Large ribosomal subunit protein uL23">
    <location>
        <begin position="1"/>
        <end position="98"/>
    </location>
</feature>
<reference key="1">
    <citation type="journal article" date="1998" name="Nature">
        <title>The genome sequence of Rickettsia prowazekii and the origin of mitochondria.</title>
        <authorList>
            <person name="Andersson S.G.E."/>
            <person name="Zomorodipour A."/>
            <person name="Andersson J.O."/>
            <person name="Sicheritz-Ponten T."/>
            <person name="Alsmark U.C.M."/>
            <person name="Podowski R.M."/>
            <person name="Naeslund A.K."/>
            <person name="Eriksson A.-S."/>
            <person name="Winkler H.H."/>
            <person name="Kurland C.G."/>
        </authorList>
    </citation>
    <scope>NUCLEOTIDE SEQUENCE [LARGE SCALE GENOMIC DNA]</scope>
    <source>
        <strain>Madrid E</strain>
    </source>
</reference>
<evidence type="ECO:0000255" key="1">
    <source>
        <dbReference type="HAMAP-Rule" id="MF_01369"/>
    </source>
</evidence>
<evidence type="ECO:0000305" key="2"/>
<keyword id="KW-1185">Reference proteome</keyword>
<keyword id="KW-0687">Ribonucleoprotein</keyword>
<keyword id="KW-0689">Ribosomal protein</keyword>
<keyword id="KW-0694">RNA-binding</keyword>
<keyword id="KW-0699">rRNA-binding</keyword>
<gene>
    <name evidence="1" type="primary">rplW</name>
    <name type="ordered locus">RP657</name>
</gene>
<comment type="function">
    <text evidence="1">One of the early assembly proteins it binds 23S rRNA. One of the proteins that surrounds the polypeptide exit tunnel on the outside of the ribosome. Forms the main docking site for trigger factor binding to the ribosome.</text>
</comment>
<comment type="subunit">
    <text evidence="1">Part of the 50S ribosomal subunit. Contacts protein L29, and trigger factor when it is bound to the ribosome.</text>
</comment>
<comment type="similarity">
    <text evidence="1">Belongs to the universal ribosomal protein uL23 family.</text>
</comment>
<organism>
    <name type="scientific">Rickettsia prowazekii (strain Madrid E)</name>
    <dbReference type="NCBI Taxonomy" id="272947"/>
    <lineage>
        <taxon>Bacteria</taxon>
        <taxon>Pseudomonadati</taxon>
        <taxon>Pseudomonadota</taxon>
        <taxon>Alphaproteobacteria</taxon>
        <taxon>Rickettsiales</taxon>
        <taxon>Rickettsiaceae</taxon>
        <taxon>Rickettsieae</taxon>
        <taxon>Rickettsia</taxon>
        <taxon>typhus group</taxon>
    </lineage>
</organism>
<protein>
    <recommendedName>
        <fullName evidence="1">Large ribosomal subunit protein uL23</fullName>
    </recommendedName>
    <alternativeName>
        <fullName evidence="2">50S ribosomal protein L23</fullName>
    </alternativeName>
</protein>